<name>PURA_CANTT</name>
<keyword id="KW-0963">Cytoplasm</keyword>
<keyword id="KW-0342">GTP-binding</keyword>
<keyword id="KW-0436">Ligase</keyword>
<keyword id="KW-0460">Magnesium</keyword>
<keyword id="KW-0479">Metal-binding</keyword>
<keyword id="KW-0547">Nucleotide-binding</keyword>
<keyword id="KW-0658">Purine biosynthesis</keyword>
<keyword id="KW-1185">Reference proteome</keyword>
<dbReference type="EC" id="6.3.4.4" evidence="2"/>
<dbReference type="EMBL" id="GG692398">
    <property type="protein sequence ID" value="EER32969.1"/>
    <property type="molecule type" value="Genomic_DNA"/>
</dbReference>
<dbReference type="RefSeq" id="XP_002549097.1">
    <property type="nucleotide sequence ID" value="XM_002549051.1"/>
</dbReference>
<dbReference type="SMR" id="C5MBF2"/>
<dbReference type="STRING" id="294747.C5MBF2"/>
<dbReference type="EnsemblFungi" id="CTRG_03394-t43_1">
    <property type="protein sequence ID" value="CTRG_03394-t43_1-p1"/>
    <property type="gene ID" value="CTRG_03394"/>
</dbReference>
<dbReference type="GeneID" id="8301989"/>
<dbReference type="KEGG" id="ctp:CTRG_03394"/>
<dbReference type="VEuPathDB" id="FungiDB:CTRG_03394"/>
<dbReference type="eggNOG" id="KOG1355">
    <property type="taxonomic scope" value="Eukaryota"/>
</dbReference>
<dbReference type="HOGENOM" id="CLU_029848_3_2_1"/>
<dbReference type="OrthoDB" id="10265645at2759"/>
<dbReference type="UniPathway" id="UPA00075">
    <property type="reaction ID" value="UER00335"/>
</dbReference>
<dbReference type="Proteomes" id="UP000002037">
    <property type="component" value="Unassembled WGS sequence"/>
</dbReference>
<dbReference type="GO" id="GO:0005737">
    <property type="term" value="C:cytoplasm"/>
    <property type="evidence" value="ECO:0007669"/>
    <property type="project" value="UniProtKB-SubCell"/>
</dbReference>
<dbReference type="GO" id="GO:0004019">
    <property type="term" value="F:adenylosuccinate synthase activity"/>
    <property type="evidence" value="ECO:0007669"/>
    <property type="project" value="UniProtKB-UniRule"/>
</dbReference>
<dbReference type="GO" id="GO:0005525">
    <property type="term" value="F:GTP binding"/>
    <property type="evidence" value="ECO:0007669"/>
    <property type="project" value="UniProtKB-UniRule"/>
</dbReference>
<dbReference type="GO" id="GO:0000287">
    <property type="term" value="F:magnesium ion binding"/>
    <property type="evidence" value="ECO:0007669"/>
    <property type="project" value="UniProtKB-UniRule"/>
</dbReference>
<dbReference type="GO" id="GO:0044208">
    <property type="term" value="P:'de novo' AMP biosynthetic process"/>
    <property type="evidence" value="ECO:0007669"/>
    <property type="project" value="UniProtKB-UniRule"/>
</dbReference>
<dbReference type="GO" id="GO:0046040">
    <property type="term" value="P:IMP metabolic process"/>
    <property type="evidence" value="ECO:0007669"/>
    <property type="project" value="TreeGrafter"/>
</dbReference>
<dbReference type="CDD" id="cd03108">
    <property type="entry name" value="AdSS"/>
    <property type="match status" value="1"/>
</dbReference>
<dbReference type="FunFam" id="3.90.170.10:FF:000001">
    <property type="entry name" value="Adenylosuccinate synthetase"/>
    <property type="match status" value="1"/>
</dbReference>
<dbReference type="FunFam" id="1.10.300.10:FF:000002">
    <property type="entry name" value="Adenylosuccinate synthetase, chloroplastic"/>
    <property type="match status" value="1"/>
</dbReference>
<dbReference type="Gene3D" id="3.40.440.10">
    <property type="entry name" value="Adenylosuccinate Synthetase, subunit A, domain 1"/>
    <property type="match status" value="1"/>
</dbReference>
<dbReference type="Gene3D" id="1.10.300.10">
    <property type="entry name" value="Adenylosuccinate Synthetase, subunit A, domain 2"/>
    <property type="match status" value="1"/>
</dbReference>
<dbReference type="Gene3D" id="3.90.170.10">
    <property type="entry name" value="Adenylosuccinate Synthetase, subunit A, domain 3"/>
    <property type="match status" value="1"/>
</dbReference>
<dbReference type="HAMAP" id="MF_00011">
    <property type="entry name" value="Adenylosucc_synth"/>
    <property type="match status" value="1"/>
</dbReference>
<dbReference type="InterPro" id="IPR018220">
    <property type="entry name" value="Adenylosuccin_syn_GTP-bd"/>
</dbReference>
<dbReference type="InterPro" id="IPR033128">
    <property type="entry name" value="Adenylosuccin_syn_Lys_AS"/>
</dbReference>
<dbReference type="InterPro" id="IPR042109">
    <property type="entry name" value="Adenylosuccinate_synth_dom1"/>
</dbReference>
<dbReference type="InterPro" id="IPR042110">
    <property type="entry name" value="Adenylosuccinate_synth_dom2"/>
</dbReference>
<dbReference type="InterPro" id="IPR042111">
    <property type="entry name" value="Adenylosuccinate_synth_dom3"/>
</dbReference>
<dbReference type="InterPro" id="IPR001114">
    <property type="entry name" value="Adenylosuccinate_synthetase"/>
</dbReference>
<dbReference type="InterPro" id="IPR027417">
    <property type="entry name" value="P-loop_NTPase"/>
</dbReference>
<dbReference type="NCBIfam" id="NF002223">
    <property type="entry name" value="PRK01117.1"/>
    <property type="match status" value="1"/>
</dbReference>
<dbReference type="NCBIfam" id="TIGR00184">
    <property type="entry name" value="purA"/>
    <property type="match status" value="1"/>
</dbReference>
<dbReference type="PANTHER" id="PTHR11846">
    <property type="entry name" value="ADENYLOSUCCINATE SYNTHETASE"/>
    <property type="match status" value="1"/>
</dbReference>
<dbReference type="PANTHER" id="PTHR11846:SF0">
    <property type="entry name" value="ADENYLOSUCCINATE SYNTHETASE"/>
    <property type="match status" value="1"/>
</dbReference>
<dbReference type="Pfam" id="PF00709">
    <property type="entry name" value="Adenylsucc_synt"/>
    <property type="match status" value="1"/>
</dbReference>
<dbReference type="SMART" id="SM00788">
    <property type="entry name" value="Adenylsucc_synt"/>
    <property type="match status" value="1"/>
</dbReference>
<dbReference type="SUPFAM" id="SSF52540">
    <property type="entry name" value="P-loop containing nucleoside triphosphate hydrolases"/>
    <property type="match status" value="1"/>
</dbReference>
<dbReference type="PROSITE" id="PS01266">
    <property type="entry name" value="ADENYLOSUCCIN_SYN_1"/>
    <property type="match status" value="1"/>
</dbReference>
<dbReference type="PROSITE" id="PS00513">
    <property type="entry name" value="ADENYLOSUCCIN_SYN_2"/>
    <property type="match status" value="1"/>
</dbReference>
<proteinExistence type="inferred from homology"/>
<comment type="function">
    <text evidence="1">Plays an important role in the de novo pathway and in the salvage pathway of purine nucleotide biosynthesis. Catalyzes the first committed step in the biosynthesis of AMP from IMP (By similarity).</text>
</comment>
<comment type="catalytic activity">
    <reaction evidence="2">
        <text>IMP + L-aspartate + GTP = N(6)-(1,2-dicarboxyethyl)-AMP + GDP + phosphate + 2 H(+)</text>
        <dbReference type="Rhea" id="RHEA:15753"/>
        <dbReference type="ChEBI" id="CHEBI:15378"/>
        <dbReference type="ChEBI" id="CHEBI:29991"/>
        <dbReference type="ChEBI" id="CHEBI:37565"/>
        <dbReference type="ChEBI" id="CHEBI:43474"/>
        <dbReference type="ChEBI" id="CHEBI:57567"/>
        <dbReference type="ChEBI" id="CHEBI:58053"/>
        <dbReference type="ChEBI" id="CHEBI:58189"/>
        <dbReference type="EC" id="6.3.4.4"/>
    </reaction>
</comment>
<comment type="cofactor">
    <cofactor evidence="2">
        <name>Mg(2+)</name>
        <dbReference type="ChEBI" id="CHEBI:18420"/>
    </cofactor>
    <text evidence="2">Binds 1 Mg(2+) ion per subunit.</text>
</comment>
<comment type="pathway">
    <text evidence="2">Purine metabolism; AMP biosynthesis via de novo pathway; AMP from IMP: step 1/2.</text>
</comment>
<comment type="subunit">
    <text evidence="2">Homodimer.</text>
</comment>
<comment type="subcellular location">
    <subcellularLocation>
        <location evidence="2">Cytoplasm</location>
    </subcellularLocation>
</comment>
<comment type="similarity">
    <text evidence="2">Belongs to the adenylosuccinate synthetase family.</text>
</comment>
<sequence length="428" mass="47777">MCDVVLGSQWGDEGKGKLVDLLCDDIDVCARCAGGNNAGHTIVVDKTKYDFHMLPSGLVNPNCKNLVGSGVVIHVPSFFQELENLEAKGLDCRDRLFVSSRAHLVFDFHQRTDKLKEAELSTNKKAIGTTGKGIGPTYSTKASRSGIRVHHLVNPDPAAWEDFKTRYMRLVESRQKRYGQFDYDYEEELARYEKYRETLRPFVVDSVVFMHDAIAANKKILVEGANALMLDIDFGTYPYVTSSSTGIGGVLTGLGIPPRTIKNVYGVVKAYTTRVGEGPFPTEQLNEVGETLQDVGAEYGVTTGRKRRCGWLDLVVLKYSNAINGYTSLNITKLDVLDKFKEIEVGVAYKLNGKELPSFPEDLIDLAKVEVVYKKFPGWEQDITGISKYEDLPENAKNYLKFIEEYLGVPIQWVGTGPARESMLEKKI</sequence>
<feature type="chain" id="PRO_0000399330" description="Adenylosuccinate synthetase">
    <location>
        <begin position="1"/>
        <end position="428"/>
    </location>
</feature>
<feature type="active site" description="Proton acceptor" evidence="2">
    <location>
        <position position="12"/>
    </location>
</feature>
<feature type="active site" description="Proton donor" evidence="2">
    <location>
        <position position="40"/>
    </location>
</feature>
<feature type="binding site" evidence="2">
    <location>
        <begin position="11"/>
        <end position="17"/>
    </location>
    <ligand>
        <name>GTP</name>
        <dbReference type="ChEBI" id="CHEBI:37565"/>
    </ligand>
</feature>
<feature type="binding site" description="in other chain" evidence="2">
    <location>
        <begin position="12"/>
        <end position="15"/>
    </location>
    <ligand>
        <name>IMP</name>
        <dbReference type="ChEBI" id="CHEBI:58053"/>
        <note>ligand shared between dimeric partners</note>
    </ligand>
</feature>
<feature type="binding site" evidence="2">
    <location>
        <position position="12"/>
    </location>
    <ligand>
        <name>Mg(2+)</name>
        <dbReference type="ChEBI" id="CHEBI:18420"/>
    </ligand>
</feature>
<feature type="binding site" description="in other chain" evidence="2">
    <location>
        <begin position="37"/>
        <end position="40"/>
    </location>
    <ligand>
        <name>IMP</name>
        <dbReference type="ChEBI" id="CHEBI:58053"/>
        <note>ligand shared between dimeric partners</note>
    </ligand>
</feature>
<feature type="binding site" evidence="2">
    <location>
        <begin position="39"/>
        <end position="41"/>
    </location>
    <ligand>
        <name>GTP</name>
        <dbReference type="ChEBI" id="CHEBI:37565"/>
    </ligand>
</feature>
<feature type="binding site" evidence="2">
    <location>
        <position position="39"/>
    </location>
    <ligand>
        <name>Mg(2+)</name>
        <dbReference type="ChEBI" id="CHEBI:18420"/>
    </ligand>
</feature>
<feature type="binding site" description="in other chain" evidence="2">
    <location>
        <position position="130"/>
    </location>
    <ligand>
        <name>IMP</name>
        <dbReference type="ChEBI" id="CHEBI:58053"/>
        <note>ligand shared between dimeric partners</note>
    </ligand>
</feature>
<feature type="binding site" evidence="2">
    <location>
        <position position="144"/>
    </location>
    <ligand>
        <name>IMP</name>
        <dbReference type="ChEBI" id="CHEBI:58053"/>
        <note>ligand shared between dimeric partners</note>
    </ligand>
</feature>
<feature type="binding site" description="in other chain" evidence="2">
    <location>
        <position position="226"/>
    </location>
    <ligand>
        <name>IMP</name>
        <dbReference type="ChEBI" id="CHEBI:58053"/>
        <note>ligand shared between dimeric partners</note>
    </ligand>
</feature>
<feature type="binding site" description="in other chain" evidence="2">
    <location>
        <position position="241"/>
    </location>
    <ligand>
        <name>IMP</name>
        <dbReference type="ChEBI" id="CHEBI:58053"/>
        <note>ligand shared between dimeric partners</note>
    </ligand>
</feature>
<feature type="binding site" evidence="2">
    <location>
        <begin position="301"/>
        <end position="307"/>
    </location>
    <ligand>
        <name>substrate</name>
    </ligand>
</feature>
<feature type="binding site" description="in other chain" evidence="2">
    <location>
        <position position="305"/>
    </location>
    <ligand>
        <name>IMP</name>
        <dbReference type="ChEBI" id="CHEBI:58053"/>
        <note>ligand shared between dimeric partners</note>
    </ligand>
</feature>
<feature type="binding site" evidence="2">
    <location>
        <position position="307"/>
    </location>
    <ligand>
        <name>GTP</name>
        <dbReference type="ChEBI" id="CHEBI:37565"/>
    </ligand>
</feature>
<feature type="binding site" evidence="2">
    <location>
        <begin position="333"/>
        <end position="335"/>
    </location>
    <ligand>
        <name>GTP</name>
        <dbReference type="ChEBI" id="CHEBI:37565"/>
    </ligand>
</feature>
<feature type="binding site" evidence="2">
    <location>
        <begin position="415"/>
        <end position="417"/>
    </location>
    <ligand>
        <name>GTP</name>
        <dbReference type="ChEBI" id="CHEBI:37565"/>
    </ligand>
</feature>
<accession>C5MBF2</accession>
<protein>
    <recommendedName>
        <fullName evidence="2">Adenylosuccinate synthetase</fullName>
        <shortName evidence="2">AMPSase</shortName>
        <shortName evidence="2">AdSS</shortName>
        <ecNumber evidence="2">6.3.4.4</ecNumber>
    </recommendedName>
    <alternativeName>
        <fullName evidence="2">IMP--aspartate ligase</fullName>
    </alternativeName>
</protein>
<organism>
    <name type="scientific">Candida tropicalis (strain ATCC MYA-3404 / T1)</name>
    <name type="common">Yeast</name>
    <dbReference type="NCBI Taxonomy" id="294747"/>
    <lineage>
        <taxon>Eukaryota</taxon>
        <taxon>Fungi</taxon>
        <taxon>Dikarya</taxon>
        <taxon>Ascomycota</taxon>
        <taxon>Saccharomycotina</taxon>
        <taxon>Pichiomycetes</taxon>
        <taxon>Debaryomycetaceae</taxon>
        <taxon>Candida/Lodderomyces clade</taxon>
        <taxon>Candida</taxon>
    </lineage>
</organism>
<reference key="1">
    <citation type="journal article" date="2009" name="Nature">
        <title>Evolution of pathogenicity and sexual reproduction in eight Candida genomes.</title>
        <authorList>
            <person name="Butler G."/>
            <person name="Rasmussen M.D."/>
            <person name="Lin M.F."/>
            <person name="Santos M.A.S."/>
            <person name="Sakthikumar S."/>
            <person name="Munro C.A."/>
            <person name="Rheinbay E."/>
            <person name="Grabherr M."/>
            <person name="Forche A."/>
            <person name="Reedy J.L."/>
            <person name="Agrafioti I."/>
            <person name="Arnaud M.B."/>
            <person name="Bates S."/>
            <person name="Brown A.J.P."/>
            <person name="Brunke S."/>
            <person name="Costanzo M.C."/>
            <person name="Fitzpatrick D.A."/>
            <person name="de Groot P.W.J."/>
            <person name="Harris D."/>
            <person name="Hoyer L.L."/>
            <person name="Hube B."/>
            <person name="Klis F.M."/>
            <person name="Kodira C."/>
            <person name="Lennard N."/>
            <person name="Logue M.E."/>
            <person name="Martin R."/>
            <person name="Neiman A.M."/>
            <person name="Nikolaou E."/>
            <person name="Quail M.A."/>
            <person name="Quinn J."/>
            <person name="Santos M.C."/>
            <person name="Schmitzberger F.F."/>
            <person name="Sherlock G."/>
            <person name="Shah P."/>
            <person name="Silverstein K.A.T."/>
            <person name="Skrzypek M.S."/>
            <person name="Soll D."/>
            <person name="Staggs R."/>
            <person name="Stansfield I."/>
            <person name="Stumpf M.P.H."/>
            <person name="Sudbery P.E."/>
            <person name="Srikantha T."/>
            <person name="Zeng Q."/>
            <person name="Berman J."/>
            <person name="Berriman M."/>
            <person name="Heitman J."/>
            <person name="Gow N.A.R."/>
            <person name="Lorenz M.C."/>
            <person name="Birren B.W."/>
            <person name="Kellis M."/>
            <person name="Cuomo C.A."/>
        </authorList>
    </citation>
    <scope>NUCLEOTIDE SEQUENCE [LARGE SCALE GENOMIC DNA]</scope>
    <source>
        <strain>ATCC MYA-3404 / T1</strain>
    </source>
</reference>
<gene>
    <name type="ORF">CTRG_03394</name>
</gene>
<evidence type="ECO:0000250" key="1"/>
<evidence type="ECO:0000255" key="2">
    <source>
        <dbReference type="HAMAP-Rule" id="MF_03125"/>
    </source>
</evidence>